<comment type="function">
    <text evidence="1">Binds to 23S rRNA. Forms part of two intersubunit bridges in the 70S ribosome.</text>
</comment>
<comment type="subunit">
    <text evidence="1">Part of the 50S ribosomal subunit. Forms a cluster with proteins L3 and L19. In the 70S ribosome, L14 and L19 interact and together make contacts with the 16S rRNA in bridges B5 and B8.</text>
</comment>
<comment type="similarity">
    <text evidence="1">Belongs to the universal ribosomal protein uL14 family.</text>
</comment>
<accession>B1HMX0</accession>
<dbReference type="EMBL" id="CP000817">
    <property type="protein sequence ID" value="ACA42048.1"/>
    <property type="molecule type" value="Genomic_DNA"/>
</dbReference>
<dbReference type="RefSeq" id="WP_012296058.1">
    <property type="nucleotide sequence ID" value="NC_010382.1"/>
</dbReference>
<dbReference type="SMR" id="B1HMX0"/>
<dbReference type="EnsemblBacteria" id="ACA42048">
    <property type="protein sequence ID" value="ACA42048"/>
    <property type="gene ID" value="Bsph_4604"/>
</dbReference>
<dbReference type="KEGG" id="lsp:Bsph_4604"/>
<dbReference type="HOGENOM" id="CLU_095071_2_1_9"/>
<dbReference type="Proteomes" id="UP000002164">
    <property type="component" value="Chromosome"/>
</dbReference>
<dbReference type="GO" id="GO:0022625">
    <property type="term" value="C:cytosolic large ribosomal subunit"/>
    <property type="evidence" value="ECO:0007669"/>
    <property type="project" value="TreeGrafter"/>
</dbReference>
<dbReference type="GO" id="GO:0070180">
    <property type="term" value="F:large ribosomal subunit rRNA binding"/>
    <property type="evidence" value="ECO:0007669"/>
    <property type="project" value="TreeGrafter"/>
</dbReference>
<dbReference type="GO" id="GO:0003735">
    <property type="term" value="F:structural constituent of ribosome"/>
    <property type="evidence" value="ECO:0007669"/>
    <property type="project" value="InterPro"/>
</dbReference>
<dbReference type="GO" id="GO:0006412">
    <property type="term" value="P:translation"/>
    <property type="evidence" value="ECO:0007669"/>
    <property type="project" value="UniProtKB-UniRule"/>
</dbReference>
<dbReference type="CDD" id="cd00337">
    <property type="entry name" value="Ribosomal_uL14"/>
    <property type="match status" value="1"/>
</dbReference>
<dbReference type="FunFam" id="2.40.150.20:FF:000001">
    <property type="entry name" value="50S ribosomal protein L14"/>
    <property type="match status" value="1"/>
</dbReference>
<dbReference type="Gene3D" id="2.40.150.20">
    <property type="entry name" value="Ribosomal protein L14"/>
    <property type="match status" value="1"/>
</dbReference>
<dbReference type="HAMAP" id="MF_01367">
    <property type="entry name" value="Ribosomal_uL14"/>
    <property type="match status" value="1"/>
</dbReference>
<dbReference type="InterPro" id="IPR000218">
    <property type="entry name" value="Ribosomal_uL14"/>
</dbReference>
<dbReference type="InterPro" id="IPR005745">
    <property type="entry name" value="Ribosomal_uL14_bac-type"/>
</dbReference>
<dbReference type="InterPro" id="IPR019972">
    <property type="entry name" value="Ribosomal_uL14_CS"/>
</dbReference>
<dbReference type="InterPro" id="IPR036853">
    <property type="entry name" value="Ribosomal_uL14_sf"/>
</dbReference>
<dbReference type="NCBIfam" id="TIGR01067">
    <property type="entry name" value="rplN_bact"/>
    <property type="match status" value="1"/>
</dbReference>
<dbReference type="PANTHER" id="PTHR11761">
    <property type="entry name" value="50S/60S RIBOSOMAL PROTEIN L14/L23"/>
    <property type="match status" value="1"/>
</dbReference>
<dbReference type="PANTHER" id="PTHR11761:SF3">
    <property type="entry name" value="LARGE RIBOSOMAL SUBUNIT PROTEIN UL14M"/>
    <property type="match status" value="1"/>
</dbReference>
<dbReference type="Pfam" id="PF00238">
    <property type="entry name" value="Ribosomal_L14"/>
    <property type="match status" value="1"/>
</dbReference>
<dbReference type="SMART" id="SM01374">
    <property type="entry name" value="Ribosomal_L14"/>
    <property type="match status" value="1"/>
</dbReference>
<dbReference type="SUPFAM" id="SSF50193">
    <property type="entry name" value="Ribosomal protein L14"/>
    <property type="match status" value="1"/>
</dbReference>
<dbReference type="PROSITE" id="PS00049">
    <property type="entry name" value="RIBOSOMAL_L14"/>
    <property type="match status" value="1"/>
</dbReference>
<protein>
    <recommendedName>
        <fullName evidence="1">Large ribosomal subunit protein uL14</fullName>
    </recommendedName>
    <alternativeName>
        <fullName evidence="2">50S ribosomal protein L14</fullName>
    </alternativeName>
</protein>
<keyword id="KW-0687">Ribonucleoprotein</keyword>
<keyword id="KW-0689">Ribosomal protein</keyword>
<keyword id="KW-0694">RNA-binding</keyword>
<keyword id="KW-0699">rRNA-binding</keyword>
<organism>
    <name type="scientific">Lysinibacillus sphaericus (strain C3-41)</name>
    <dbReference type="NCBI Taxonomy" id="444177"/>
    <lineage>
        <taxon>Bacteria</taxon>
        <taxon>Bacillati</taxon>
        <taxon>Bacillota</taxon>
        <taxon>Bacilli</taxon>
        <taxon>Bacillales</taxon>
        <taxon>Bacillaceae</taxon>
        <taxon>Lysinibacillus</taxon>
    </lineage>
</organism>
<feature type="chain" id="PRO_1000144294" description="Large ribosomal subunit protein uL14">
    <location>
        <begin position="1"/>
        <end position="122"/>
    </location>
</feature>
<gene>
    <name evidence="1" type="primary">rplN</name>
    <name type="ordered locus">Bsph_4604</name>
</gene>
<proteinExistence type="inferred from homology"/>
<reference key="1">
    <citation type="journal article" date="2008" name="J. Bacteriol.">
        <title>Complete genome sequence of the mosquitocidal bacterium Bacillus sphaericus C3-41 and comparison with those of closely related Bacillus species.</title>
        <authorList>
            <person name="Hu X."/>
            <person name="Fan W."/>
            <person name="Han B."/>
            <person name="Liu H."/>
            <person name="Zheng D."/>
            <person name="Li Q."/>
            <person name="Dong W."/>
            <person name="Yan J."/>
            <person name="Gao M."/>
            <person name="Berry C."/>
            <person name="Yuan Z."/>
        </authorList>
    </citation>
    <scope>NUCLEOTIDE SEQUENCE [LARGE SCALE GENOMIC DNA]</scope>
    <source>
        <strain>C3-41</strain>
    </source>
</reference>
<name>RL14_LYSSC</name>
<evidence type="ECO:0000255" key="1">
    <source>
        <dbReference type="HAMAP-Rule" id="MF_01367"/>
    </source>
</evidence>
<evidence type="ECO:0000305" key="2"/>
<sequence>MILQESRMKVADNSGAREVLTIKVLGGSGRKTANIGDIVVCTVKKATPGGVVKKGDVVKAVIVRTKSGVRRKDGTYIKFDENACVIIRDDKSPRGTRIFGPVARELRDSNFMKIVSLAPEVL</sequence>